<keyword id="KW-0009">Actin-binding</keyword>
<keyword id="KW-0067">ATP-binding</keyword>
<keyword id="KW-0131">Cell cycle</keyword>
<keyword id="KW-0132">Cell division</keyword>
<keyword id="KW-0963">Cytoplasm</keyword>
<keyword id="KW-0206">Cytoskeleton</keyword>
<keyword id="KW-0903">Direct protein sequencing</keyword>
<keyword id="KW-0418">Kinase</keyword>
<keyword id="KW-0460">Magnesium</keyword>
<keyword id="KW-0464">Manganese</keyword>
<keyword id="KW-0479">Metal-binding</keyword>
<keyword id="KW-0547">Nucleotide-binding</keyword>
<keyword id="KW-0539">Nucleus</keyword>
<keyword id="KW-0597">Phosphoprotein</keyword>
<keyword id="KW-1185">Reference proteome</keyword>
<keyword id="KW-0723">Serine/threonine-protein kinase</keyword>
<keyword id="KW-0808">Transferase</keyword>
<accession>O61122</accession>
<accession>Q54LT1</accession>
<reference key="1">
    <citation type="journal article" date="1998" name="J. Biol. Chem.">
        <title>Characterization and cloning of a Dictyostelium Ste20-like protein kinase that phosphorylates the actin-binding protein severin.</title>
        <authorList>
            <person name="Eichinger L."/>
            <person name="Baehler M."/>
            <person name="Dietz M."/>
            <person name="Eckerskorn C."/>
            <person name="Schleicher M."/>
        </authorList>
    </citation>
    <scope>NUCLEOTIDE SEQUENCE [MRNA]</scope>
    <scope>PROTEIN SEQUENCE OF 21-26; 319-329; 341-351 AND 386-403</scope>
    <scope>FUNCTION</scope>
    <scope>COFACTOR</scope>
    <scope>ACTIVITY REGULATION</scope>
    <scope>BIOPHYSICOCHEMICAL PROPERTIES</scope>
    <scope>AUTOPHOSPHORYLATION</scope>
    <source>
        <strain>AX2</strain>
    </source>
</reference>
<reference key="2">
    <citation type="journal article" date="2005" name="Nature">
        <title>The genome of the social amoeba Dictyostelium discoideum.</title>
        <authorList>
            <person name="Eichinger L."/>
            <person name="Pachebat J.A."/>
            <person name="Gloeckner G."/>
            <person name="Rajandream M.A."/>
            <person name="Sucgang R."/>
            <person name="Berriman M."/>
            <person name="Song J."/>
            <person name="Olsen R."/>
            <person name="Szafranski K."/>
            <person name="Xu Q."/>
            <person name="Tunggal B."/>
            <person name="Kummerfeld S."/>
            <person name="Madera M."/>
            <person name="Konfortov B.A."/>
            <person name="Rivero F."/>
            <person name="Bankier A.T."/>
            <person name="Lehmann R."/>
            <person name="Hamlin N."/>
            <person name="Davies R."/>
            <person name="Gaudet P."/>
            <person name="Fey P."/>
            <person name="Pilcher K."/>
            <person name="Chen G."/>
            <person name="Saunders D."/>
            <person name="Sodergren E.J."/>
            <person name="Davis P."/>
            <person name="Kerhornou A."/>
            <person name="Nie X."/>
            <person name="Hall N."/>
            <person name="Anjard C."/>
            <person name="Hemphill L."/>
            <person name="Bason N."/>
            <person name="Farbrother P."/>
            <person name="Desany B."/>
            <person name="Just E."/>
            <person name="Morio T."/>
            <person name="Rost R."/>
            <person name="Churcher C.M."/>
            <person name="Cooper J."/>
            <person name="Haydock S."/>
            <person name="van Driessche N."/>
            <person name="Cronin A."/>
            <person name="Goodhead I."/>
            <person name="Muzny D.M."/>
            <person name="Mourier T."/>
            <person name="Pain A."/>
            <person name="Lu M."/>
            <person name="Harper D."/>
            <person name="Lindsay R."/>
            <person name="Hauser H."/>
            <person name="James K.D."/>
            <person name="Quiles M."/>
            <person name="Madan Babu M."/>
            <person name="Saito T."/>
            <person name="Buchrieser C."/>
            <person name="Wardroper A."/>
            <person name="Felder M."/>
            <person name="Thangavelu M."/>
            <person name="Johnson D."/>
            <person name="Knights A."/>
            <person name="Loulseged H."/>
            <person name="Mungall K.L."/>
            <person name="Oliver K."/>
            <person name="Price C."/>
            <person name="Quail M.A."/>
            <person name="Urushihara H."/>
            <person name="Hernandez J."/>
            <person name="Rabbinowitsch E."/>
            <person name="Steffen D."/>
            <person name="Sanders M."/>
            <person name="Ma J."/>
            <person name="Kohara Y."/>
            <person name="Sharp S."/>
            <person name="Simmonds M.N."/>
            <person name="Spiegler S."/>
            <person name="Tivey A."/>
            <person name="Sugano S."/>
            <person name="White B."/>
            <person name="Walker D."/>
            <person name="Woodward J.R."/>
            <person name="Winckler T."/>
            <person name="Tanaka Y."/>
            <person name="Shaulsky G."/>
            <person name="Schleicher M."/>
            <person name="Weinstock G.M."/>
            <person name="Rosenthal A."/>
            <person name="Cox E.C."/>
            <person name="Chisholm R.L."/>
            <person name="Gibbs R.A."/>
            <person name="Loomis W.F."/>
            <person name="Platzer M."/>
            <person name="Kay R.R."/>
            <person name="Williams J.G."/>
            <person name="Dear P.H."/>
            <person name="Noegel A.A."/>
            <person name="Barrell B.G."/>
            <person name="Kuspa A."/>
        </authorList>
    </citation>
    <scope>NUCLEOTIDE SEQUENCE [LARGE SCALE GENOMIC DNA]</scope>
    <source>
        <strain>AX4</strain>
    </source>
</reference>
<reference key="3">
    <citation type="journal article" date="2007" name="J. Cell Sci.">
        <title>The Ste20-like kinase SvkA of Dictyostelium discoideum is essential for late stages of cytokinesis.</title>
        <authorList>
            <person name="Rohlfs M."/>
            <person name="Arasada R."/>
            <person name="Batsios P."/>
            <person name="Janzen J."/>
            <person name="Schleicher M."/>
        </authorList>
    </citation>
    <scope>FUNCTION</scope>
    <scope>SUBCELLULAR LOCATION</scope>
    <scope>DISRUPTION PHENOTYPE</scope>
</reference>
<protein>
    <recommendedName>
        <fullName>Serine/threonine-protein kinase svkA</fullName>
        <ecNumber>2.7.11.1</ecNumber>
    </recommendedName>
    <alternativeName>
        <fullName>Severin kinase A</fullName>
    </alternativeName>
</protein>
<gene>
    <name type="primary">svkA</name>
    <name type="ORF">DDB_G0286359</name>
</gene>
<comment type="function">
    <text evidence="3 4">Involved in regulation of actin cytoskeleton organization during cell motility; F-actin fragmenting and capping protein allowing dynamic rearrangements of the actin cytoskeleton. Also part of a regulatory pathway from the centrosome to the midzone, thus regulating the completion of cell division.</text>
</comment>
<comment type="catalytic activity">
    <reaction>
        <text>L-seryl-[protein] + ATP = O-phospho-L-seryl-[protein] + ADP + H(+)</text>
        <dbReference type="Rhea" id="RHEA:17989"/>
        <dbReference type="Rhea" id="RHEA-COMP:9863"/>
        <dbReference type="Rhea" id="RHEA-COMP:11604"/>
        <dbReference type="ChEBI" id="CHEBI:15378"/>
        <dbReference type="ChEBI" id="CHEBI:29999"/>
        <dbReference type="ChEBI" id="CHEBI:30616"/>
        <dbReference type="ChEBI" id="CHEBI:83421"/>
        <dbReference type="ChEBI" id="CHEBI:456216"/>
        <dbReference type="EC" id="2.7.11.1"/>
    </reaction>
</comment>
<comment type="catalytic activity">
    <reaction>
        <text>L-threonyl-[protein] + ATP = O-phospho-L-threonyl-[protein] + ADP + H(+)</text>
        <dbReference type="Rhea" id="RHEA:46608"/>
        <dbReference type="Rhea" id="RHEA-COMP:11060"/>
        <dbReference type="Rhea" id="RHEA-COMP:11605"/>
        <dbReference type="ChEBI" id="CHEBI:15378"/>
        <dbReference type="ChEBI" id="CHEBI:30013"/>
        <dbReference type="ChEBI" id="CHEBI:30616"/>
        <dbReference type="ChEBI" id="CHEBI:61977"/>
        <dbReference type="ChEBI" id="CHEBI:456216"/>
        <dbReference type="EC" id="2.7.11.1"/>
    </reaction>
</comment>
<comment type="cofactor">
    <cofactor evidence="4">
        <name>Mg(2+)</name>
        <dbReference type="ChEBI" id="CHEBI:18420"/>
    </cofactor>
</comment>
<comment type="cofactor">
    <cofactor evidence="4">
        <name>Mn(2+)</name>
        <dbReference type="ChEBI" id="CHEBI:29035"/>
    </cofactor>
</comment>
<comment type="activity regulation">
    <text evidence="4">Phosphorylation of severin is reduced with high concentrations of calcium ions.</text>
</comment>
<comment type="biophysicochemical properties">
    <phDependence>
        <text evidence="4">Optimum pH is 7.5.</text>
    </phDependence>
</comment>
<comment type="subcellular location">
    <subcellularLocation>
        <location evidence="3">Cytoplasm</location>
        <location evidence="3">Cytosol</location>
    </subcellularLocation>
    <subcellularLocation>
        <location evidence="3">Nucleus</location>
    </subcellularLocation>
    <subcellularLocation>
        <location evidence="3">Cytoplasm</location>
        <location evidence="3">Cytoskeleton</location>
        <location evidence="3">Microtubule organizing center</location>
        <location evidence="3">Centrosome</location>
    </subcellularLocation>
    <subcellularLocation>
        <location evidence="3">Cytoplasm</location>
        <location evidence="3">Cytoskeleton</location>
        <location evidence="3">Spindle</location>
    </subcellularLocation>
    <subcellularLocation>
        <location evidence="3">Cleavage furrow</location>
    </subcellularLocation>
    <text>Shows overall localization in the cytosol and, to a lesser extent, in the nucleus. Enriched around the centrosome. In dividing cells, forms a cloud around the spindle and nuclei. Enriched in the cleavage furrow during late cytokinesis.</text>
</comment>
<comment type="PTM">
    <text>Autophosphorylated.</text>
</comment>
<comment type="disruption phenotype">
    <text evidence="3">Defects in cytokinesis, leading to multinucleated cells caused by failure to sever the final connecting bridge between the 2 daughter cells. Cells also display defects in development and directed slug movement.</text>
</comment>
<comment type="similarity">
    <text evidence="5">Belongs to the protein kinase superfamily. STE Ser/Thr protein kinase family. STE20 subfamily.</text>
</comment>
<name>SVKA_DICDI</name>
<proteinExistence type="evidence at protein level"/>
<feature type="chain" id="PRO_0000327907" description="Serine/threonine-protein kinase svkA">
    <location>
        <begin position="1"/>
        <end position="478"/>
    </location>
</feature>
<feature type="domain" description="Protein kinase" evidence="1">
    <location>
        <begin position="12"/>
        <end position="262"/>
    </location>
</feature>
<feature type="region of interest" description="Disordered" evidence="2">
    <location>
        <begin position="306"/>
        <end position="410"/>
    </location>
</feature>
<feature type="compositionally biased region" description="Polar residues" evidence="2">
    <location>
        <begin position="323"/>
        <end position="340"/>
    </location>
</feature>
<feature type="compositionally biased region" description="Low complexity" evidence="2">
    <location>
        <begin position="341"/>
        <end position="368"/>
    </location>
</feature>
<feature type="compositionally biased region" description="Low complexity" evidence="2">
    <location>
        <begin position="380"/>
        <end position="408"/>
    </location>
</feature>
<feature type="active site" description="Proton acceptor" evidence="1">
    <location>
        <position position="132"/>
    </location>
</feature>
<feature type="binding site" evidence="1">
    <location>
        <begin position="18"/>
        <end position="26"/>
    </location>
    <ligand>
        <name>ATP</name>
        <dbReference type="ChEBI" id="CHEBI:30616"/>
    </ligand>
</feature>
<feature type="binding site" evidence="1">
    <location>
        <position position="41"/>
    </location>
    <ligand>
        <name>ATP</name>
        <dbReference type="ChEBI" id="CHEBI:30616"/>
    </ligand>
</feature>
<organism>
    <name type="scientific">Dictyostelium discoideum</name>
    <name type="common">Social amoeba</name>
    <dbReference type="NCBI Taxonomy" id="44689"/>
    <lineage>
        <taxon>Eukaryota</taxon>
        <taxon>Amoebozoa</taxon>
        <taxon>Evosea</taxon>
        <taxon>Eumycetozoa</taxon>
        <taxon>Dictyostelia</taxon>
        <taxon>Dictyosteliales</taxon>
        <taxon>Dictyosteliaceae</taxon>
        <taxon>Dictyostelium</taxon>
    </lineage>
</organism>
<sequence>MASKKGDPEELYVRQEKIGKGSFGEVFKGINKKTNETIAIKTIDLEDAEDEIEDIQQEINVLSQCESPFVTKYFGSFLKGSKLWIIMEYLAGGSVLDLMKPGPFDEGYIAIILRELLKGLEYLHSEGKIHRDIKAANVLLSASGDVKLADFGVSGQLTDQMTKRNTFVGTPFWMAPEVIKQTGYDSKADIWSMGITALEMAKGEPPRADLHPMRALFLIPKDPPPTLEGNFSKGFKEFCALCLNKDPNQRPTAKDLLKHKFIKAAKKTSSLTDLIERRQKWLQLNGNNADDENDDLDRDAKSNEEDFGWEFPTIKQKSPVAVQEQQQTPQKPTVVSTPIKEQQQQQQPTPVTTPQQPVTTTTTTPTTETKVRSLSNSSQTTPVKTTVAATTAPATTPASNAPTSTTPNGAAVTQQQAPRASALTSVIYPVLSKLLKNTSDENVINALAQLKMAFDNAEKAKPGITHSLIAQIIETLKR</sequence>
<dbReference type="EC" id="2.7.11.1"/>
<dbReference type="EMBL" id="AF059534">
    <property type="protein sequence ID" value="AAC24522.1"/>
    <property type="molecule type" value="mRNA"/>
</dbReference>
<dbReference type="EMBL" id="AAFI02000085">
    <property type="protein sequence ID" value="EAL64204.1"/>
    <property type="molecule type" value="Genomic_DNA"/>
</dbReference>
<dbReference type="RefSeq" id="XP_637749.1">
    <property type="nucleotide sequence ID" value="XM_632657.1"/>
</dbReference>
<dbReference type="SMR" id="O61122"/>
<dbReference type="BioGRID" id="1250618">
    <property type="interactions" value="1"/>
</dbReference>
<dbReference type="FunCoup" id="O61122">
    <property type="interactions" value="41"/>
</dbReference>
<dbReference type="STRING" id="44689.O61122"/>
<dbReference type="PaxDb" id="44689-DDB0191176"/>
<dbReference type="EnsemblProtists" id="EAL64204">
    <property type="protein sequence ID" value="EAL64204"/>
    <property type="gene ID" value="DDB_G0286359"/>
</dbReference>
<dbReference type="GeneID" id="8625615"/>
<dbReference type="KEGG" id="ddi:DDB_G0286359"/>
<dbReference type="dictyBase" id="DDB_G0286359">
    <property type="gene designation" value="svkA"/>
</dbReference>
<dbReference type="VEuPathDB" id="AmoebaDB:DDB_G0286359"/>
<dbReference type="eggNOG" id="KOG0201">
    <property type="taxonomic scope" value="Eukaryota"/>
</dbReference>
<dbReference type="HOGENOM" id="CLU_000288_63_23_1"/>
<dbReference type="InParanoid" id="O61122"/>
<dbReference type="OMA" id="KEFCALC"/>
<dbReference type="PhylomeDB" id="O61122"/>
<dbReference type="PRO" id="PR:O61122"/>
<dbReference type="Proteomes" id="UP000002195">
    <property type="component" value="Chromosome 4"/>
</dbReference>
<dbReference type="GO" id="GO:0015629">
    <property type="term" value="C:actin cytoskeleton"/>
    <property type="evidence" value="ECO:0000314"/>
    <property type="project" value="UniProtKB"/>
</dbReference>
<dbReference type="GO" id="GO:0005813">
    <property type="term" value="C:centrosome"/>
    <property type="evidence" value="ECO:0000314"/>
    <property type="project" value="dictyBase"/>
</dbReference>
<dbReference type="GO" id="GO:0032154">
    <property type="term" value="C:cleavage furrow"/>
    <property type="evidence" value="ECO:0000314"/>
    <property type="project" value="dictyBase"/>
</dbReference>
<dbReference type="GO" id="GO:0005737">
    <property type="term" value="C:cytoplasm"/>
    <property type="evidence" value="ECO:0000314"/>
    <property type="project" value="dictyBase"/>
</dbReference>
<dbReference type="GO" id="GO:0005829">
    <property type="term" value="C:cytosol"/>
    <property type="evidence" value="ECO:0007669"/>
    <property type="project" value="UniProtKB-SubCell"/>
</dbReference>
<dbReference type="GO" id="GO:0072686">
    <property type="term" value="C:mitotic spindle"/>
    <property type="evidence" value="ECO:0000314"/>
    <property type="project" value="dictyBase"/>
</dbReference>
<dbReference type="GO" id="GO:0005634">
    <property type="term" value="C:nucleus"/>
    <property type="evidence" value="ECO:0007669"/>
    <property type="project" value="UniProtKB-SubCell"/>
</dbReference>
<dbReference type="GO" id="GO:0003779">
    <property type="term" value="F:actin binding"/>
    <property type="evidence" value="ECO:0007669"/>
    <property type="project" value="UniProtKB-KW"/>
</dbReference>
<dbReference type="GO" id="GO:0005524">
    <property type="term" value="F:ATP binding"/>
    <property type="evidence" value="ECO:0007669"/>
    <property type="project" value="UniProtKB-KW"/>
</dbReference>
<dbReference type="GO" id="GO:0046872">
    <property type="term" value="F:metal ion binding"/>
    <property type="evidence" value="ECO:0007669"/>
    <property type="project" value="UniProtKB-KW"/>
</dbReference>
<dbReference type="GO" id="GO:0004672">
    <property type="term" value="F:protein kinase activity"/>
    <property type="evidence" value="ECO:0000314"/>
    <property type="project" value="dictyBase"/>
</dbReference>
<dbReference type="GO" id="GO:0106310">
    <property type="term" value="F:protein serine kinase activity"/>
    <property type="evidence" value="ECO:0007669"/>
    <property type="project" value="RHEA"/>
</dbReference>
<dbReference type="GO" id="GO:0004674">
    <property type="term" value="F:protein serine/threonine kinase activity"/>
    <property type="evidence" value="ECO:0000315"/>
    <property type="project" value="UniProtKB"/>
</dbReference>
<dbReference type="GO" id="GO:0051301">
    <property type="term" value="P:cell division"/>
    <property type="evidence" value="ECO:0007669"/>
    <property type="project" value="UniProtKB-KW"/>
</dbReference>
<dbReference type="GO" id="GO:0035329">
    <property type="term" value="P:hippo signaling"/>
    <property type="evidence" value="ECO:0000314"/>
    <property type="project" value="dictyBase"/>
</dbReference>
<dbReference type="GO" id="GO:0006972">
    <property type="term" value="P:hyperosmotic response"/>
    <property type="evidence" value="ECO:0000270"/>
    <property type="project" value="dictyBase"/>
</dbReference>
<dbReference type="GO" id="GO:0035556">
    <property type="term" value="P:intracellular signal transduction"/>
    <property type="evidence" value="ECO:0000318"/>
    <property type="project" value="GO_Central"/>
</dbReference>
<dbReference type="GO" id="GO:0051781">
    <property type="term" value="P:positive regulation of cell division"/>
    <property type="evidence" value="ECO:0000315"/>
    <property type="project" value="UniProtKB"/>
</dbReference>
<dbReference type="GO" id="GO:1903438">
    <property type="term" value="P:positive regulation of mitotic cytokinetic process"/>
    <property type="evidence" value="ECO:0000315"/>
    <property type="project" value="dictyBase"/>
</dbReference>
<dbReference type="GO" id="GO:0006468">
    <property type="term" value="P:protein phosphorylation"/>
    <property type="evidence" value="ECO:0000315"/>
    <property type="project" value="UniProtKB"/>
</dbReference>
<dbReference type="GO" id="GO:0032956">
    <property type="term" value="P:regulation of actin cytoskeleton organization"/>
    <property type="evidence" value="ECO:0000315"/>
    <property type="project" value="UniProtKB"/>
</dbReference>
<dbReference type="GO" id="GO:0031156">
    <property type="term" value="P:regulation of sorocarp development"/>
    <property type="evidence" value="ECO:0000315"/>
    <property type="project" value="dictyBase"/>
</dbReference>
<dbReference type="CDD" id="cd06609">
    <property type="entry name" value="STKc_MST3_like"/>
    <property type="match status" value="1"/>
</dbReference>
<dbReference type="FunFam" id="1.10.510.10:FF:000411">
    <property type="entry name" value="Probable Ste20-like kinase Don3"/>
    <property type="match status" value="1"/>
</dbReference>
<dbReference type="FunFam" id="3.30.200.20:FF:000092">
    <property type="entry name" value="Serine/threonine-protein kinase 24"/>
    <property type="match status" value="1"/>
</dbReference>
<dbReference type="Gene3D" id="1.10.12.70">
    <property type="match status" value="1"/>
</dbReference>
<dbReference type="Gene3D" id="3.30.200.20">
    <property type="entry name" value="Phosphorylase Kinase, domain 1"/>
    <property type="match status" value="1"/>
</dbReference>
<dbReference type="Gene3D" id="1.10.510.10">
    <property type="entry name" value="Transferase(Phosphotransferase) domain 1"/>
    <property type="match status" value="1"/>
</dbReference>
<dbReference type="InterPro" id="IPR011009">
    <property type="entry name" value="Kinase-like_dom_sf"/>
</dbReference>
<dbReference type="InterPro" id="IPR046409">
    <property type="entry name" value="PDC10_dimerisation_sf"/>
</dbReference>
<dbReference type="InterPro" id="IPR048288">
    <property type="entry name" value="PDCD10_N"/>
</dbReference>
<dbReference type="InterPro" id="IPR000719">
    <property type="entry name" value="Prot_kinase_dom"/>
</dbReference>
<dbReference type="InterPro" id="IPR017441">
    <property type="entry name" value="Protein_kinase_ATP_BS"/>
</dbReference>
<dbReference type="InterPro" id="IPR050629">
    <property type="entry name" value="STE20/SPS1-PAK"/>
</dbReference>
<dbReference type="PANTHER" id="PTHR48012:SF10">
    <property type="entry name" value="FI20177P1"/>
    <property type="match status" value="1"/>
</dbReference>
<dbReference type="PANTHER" id="PTHR48012">
    <property type="entry name" value="STERILE20-LIKE KINASE, ISOFORM B-RELATED"/>
    <property type="match status" value="1"/>
</dbReference>
<dbReference type="Pfam" id="PF20929">
    <property type="entry name" value="PDCD10_N"/>
    <property type="match status" value="1"/>
</dbReference>
<dbReference type="Pfam" id="PF00069">
    <property type="entry name" value="Pkinase"/>
    <property type="match status" value="1"/>
</dbReference>
<dbReference type="SMART" id="SM00220">
    <property type="entry name" value="S_TKc"/>
    <property type="match status" value="1"/>
</dbReference>
<dbReference type="SUPFAM" id="SSF56112">
    <property type="entry name" value="Protein kinase-like (PK-like)"/>
    <property type="match status" value="1"/>
</dbReference>
<dbReference type="PROSITE" id="PS00107">
    <property type="entry name" value="PROTEIN_KINASE_ATP"/>
    <property type="match status" value="1"/>
</dbReference>
<dbReference type="PROSITE" id="PS50011">
    <property type="entry name" value="PROTEIN_KINASE_DOM"/>
    <property type="match status" value="1"/>
</dbReference>
<evidence type="ECO:0000255" key="1">
    <source>
        <dbReference type="PROSITE-ProRule" id="PRU00159"/>
    </source>
</evidence>
<evidence type="ECO:0000256" key="2">
    <source>
        <dbReference type="SAM" id="MobiDB-lite"/>
    </source>
</evidence>
<evidence type="ECO:0000269" key="3">
    <source>
    </source>
</evidence>
<evidence type="ECO:0000269" key="4">
    <source>
    </source>
</evidence>
<evidence type="ECO:0000305" key="5"/>